<sequence length="207" mass="23088">MLTIAMPKGRIFEEAVELLRRADYALPPEFTESRKLVIDVPEENMRFILAKPMDVVTYVEHGVADLGIAGKDVLMEEERDVYELLDLHISRCHLAVAGMPGAKMNEIAPRVATKYPNIASTYFREQGEQVEIIRLNGSIELAPLIGLADRIVDIVSTGRTLRENGLVELERIAEVTSRLIVNPASYRLNGGDIERLVDRLAAVIPQP</sequence>
<accession>Q5KVC5</accession>
<keyword id="KW-0028">Amino-acid biosynthesis</keyword>
<keyword id="KW-0067">ATP-binding</keyword>
<keyword id="KW-0963">Cytoplasm</keyword>
<keyword id="KW-0328">Glycosyltransferase</keyword>
<keyword id="KW-0368">Histidine biosynthesis</keyword>
<keyword id="KW-0547">Nucleotide-binding</keyword>
<keyword id="KW-1185">Reference proteome</keyword>
<keyword id="KW-0808">Transferase</keyword>
<feature type="chain" id="PRO_0000229315" description="ATP phosphoribosyltransferase">
    <location>
        <begin position="1"/>
        <end position="207"/>
    </location>
</feature>
<reference key="1">
    <citation type="journal article" date="2004" name="Nucleic Acids Res.">
        <title>Thermoadaptation trait revealed by the genome sequence of thermophilic Geobacillus kaustophilus.</title>
        <authorList>
            <person name="Takami H."/>
            <person name="Takaki Y."/>
            <person name="Chee G.-J."/>
            <person name="Nishi S."/>
            <person name="Shimamura S."/>
            <person name="Suzuki H."/>
            <person name="Matsui S."/>
            <person name="Uchiyama I."/>
        </authorList>
    </citation>
    <scope>NUCLEOTIDE SEQUENCE [LARGE SCALE GENOMIC DNA]</scope>
    <source>
        <strain>HTA426</strain>
    </source>
</reference>
<proteinExistence type="inferred from homology"/>
<evidence type="ECO:0000255" key="1">
    <source>
        <dbReference type="HAMAP-Rule" id="MF_01018"/>
    </source>
</evidence>
<protein>
    <recommendedName>
        <fullName evidence="1">ATP phosphoribosyltransferase</fullName>
        <shortName evidence="1">ATP-PRT</shortName>
        <shortName evidence="1">ATP-PRTase</shortName>
        <ecNumber evidence="1">2.4.2.17</ecNumber>
    </recommendedName>
</protein>
<dbReference type="EC" id="2.4.2.17" evidence="1"/>
<dbReference type="EMBL" id="BA000043">
    <property type="protein sequence ID" value="BAD77361.1"/>
    <property type="molecule type" value="Genomic_DNA"/>
</dbReference>
<dbReference type="RefSeq" id="WP_011232546.1">
    <property type="nucleotide sequence ID" value="NC_006510.1"/>
</dbReference>
<dbReference type="SMR" id="Q5KVC5"/>
<dbReference type="STRING" id="235909.GK3076"/>
<dbReference type="GeneID" id="32064949"/>
<dbReference type="KEGG" id="gka:GK3076"/>
<dbReference type="PATRIC" id="fig|235909.7.peg.3283"/>
<dbReference type="eggNOG" id="COG0040">
    <property type="taxonomic scope" value="Bacteria"/>
</dbReference>
<dbReference type="HOGENOM" id="CLU_038115_2_0_9"/>
<dbReference type="UniPathway" id="UPA00031">
    <property type="reaction ID" value="UER00006"/>
</dbReference>
<dbReference type="Proteomes" id="UP000001172">
    <property type="component" value="Chromosome"/>
</dbReference>
<dbReference type="GO" id="GO:0005737">
    <property type="term" value="C:cytoplasm"/>
    <property type="evidence" value="ECO:0007669"/>
    <property type="project" value="UniProtKB-SubCell"/>
</dbReference>
<dbReference type="GO" id="GO:0005524">
    <property type="term" value="F:ATP binding"/>
    <property type="evidence" value="ECO:0007669"/>
    <property type="project" value="UniProtKB-KW"/>
</dbReference>
<dbReference type="GO" id="GO:0003879">
    <property type="term" value="F:ATP phosphoribosyltransferase activity"/>
    <property type="evidence" value="ECO:0007669"/>
    <property type="project" value="UniProtKB-UniRule"/>
</dbReference>
<dbReference type="GO" id="GO:0000105">
    <property type="term" value="P:L-histidine biosynthetic process"/>
    <property type="evidence" value="ECO:0007669"/>
    <property type="project" value="UniProtKB-UniRule"/>
</dbReference>
<dbReference type="CDD" id="cd13595">
    <property type="entry name" value="PBP2_HisGs"/>
    <property type="match status" value="1"/>
</dbReference>
<dbReference type="FunFam" id="3.40.190.10:FF:000008">
    <property type="entry name" value="ATP phosphoribosyltransferase"/>
    <property type="match status" value="1"/>
</dbReference>
<dbReference type="FunFam" id="3.40.190.10:FF:000011">
    <property type="entry name" value="ATP phosphoribosyltransferase"/>
    <property type="match status" value="1"/>
</dbReference>
<dbReference type="Gene3D" id="3.40.190.10">
    <property type="entry name" value="Periplasmic binding protein-like II"/>
    <property type="match status" value="2"/>
</dbReference>
<dbReference type="HAMAP" id="MF_01018">
    <property type="entry name" value="HisG_Short"/>
    <property type="match status" value="1"/>
</dbReference>
<dbReference type="InterPro" id="IPR013820">
    <property type="entry name" value="ATP_PRibTrfase_cat"/>
</dbReference>
<dbReference type="InterPro" id="IPR018198">
    <property type="entry name" value="ATP_PRibTrfase_CS"/>
</dbReference>
<dbReference type="InterPro" id="IPR001348">
    <property type="entry name" value="ATP_PRibTrfase_HisG"/>
</dbReference>
<dbReference type="InterPro" id="IPR024893">
    <property type="entry name" value="ATP_PRibTrfase_HisG_short"/>
</dbReference>
<dbReference type="NCBIfam" id="TIGR00070">
    <property type="entry name" value="hisG"/>
    <property type="match status" value="1"/>
</dbReference>
<dbReference type="PANTHER" id="PTHR21403:SF8">
    <property type="entry name" value="ATP PHOSPHORIBOSYLTRANSFERASE"/>
    <property type="match status" value="1"/>
</dbReference>
<dbReference type="PANTHER" id="PTHR21403">
    <property type="entry name" value="ATP PHOSPHORIBOSYLTRANSFERASE ATP-PRTASE"/>
    <property type="match status" value="1"/>
</dbReference>
<dbReference type="Pfam" id="PF01634">
    <property type="entry name" value="HisG"/>
    <property type="match status" value="1"/>
</dbReference>
<dbReference type="SUPFAM" id="SSF53850">
    <property type="entry name" value="Periplasmic binding protein-like II"/>
    <property type="match status" value="1"/>
</dbReference>
<dbReference type="PROSITE" id="PS01316">
    <property type="entry name" value="ATP_P_PHORIBOSYLTR"/>
    <property type="match status" value="1"/>
</dbReference>
<gene>
    <name evidence="1" type="primary">hisG</name>
    <name type="ordered locus">GK3076</name>
</gene>
<name>HIS1_GEOKA</name>
<organism>
    <name type="scientific">Geobacillus kaustophilus (strain HTA426)</name>
    <dbReference type="NCBI Taxonomy" id="235909"/>
    <lineage>
        <taxon>Bacteria</taxon>
        <taxon>Bacillati</taxon>
        <taxon>Bacillota</taxon>
        <taxon>Bacilli</taxon>
        <taxon>Bacillales</taxon>
        <taxon>Anoxybacillaceae</taxon>
        <taxon>Geobacillus</taxon>
        <taxon>Geobacillus thermoleovorans group</taxon>
    </lineage>
</organism>
<comment type="function">
    <text evidence="1">Catalyzes the condensation of ATP and 5-phosphoribose 1-diphosphate to form N'-(5'-phosphoribosyl)-ATP (PR-ATP). Has a crucial role in the pathway because the rate of histidine biosynthesis seems to be controlled primarily by regulation of HisG enzymatic activity.</text>
</comment>
<comment type="catalytic activity">
    <reaction evidence="1">
        <text>1-(5-phospho-beta-D-ribosyl)-ATP + diphosphate = 5-phospho-alpha-D-ribose 1-diphosphate + ATP</text>
        <dbReference type="Rhea" id="RHEA:18473"/>
        <dbReference type="ChEBI" id="CHEBI:30616"/>
        <dbReference type="ChEBI" id="CHEBI:33019"/>
        <dbReference type="ChEBI" id="CHEBI:58017"/>
        <dbReference type="ChEBI" id="CHEBI:73183"/>
        <dbReference type="EC" id="2.4.2.17"/>
    </reaction>
</comment>
<comment type="pathway">
    <text evidence="1">Amino-acid biosynthesis; L-histidine biosynthesis; L-histidine from 5-phospho-alpha-D-ribose 1-diphosphate: step 1/9.</text>
</comment>
<comment type="subunit">
    <text evidence="1">Heteromultimer composed of HisG and HisZ subunits.</text>
</comment>
<comment type="subcellular location">
    <subcellularLocation>
        <location evidence="1">Cytoplasm</location>
    </subcellularLocation>
</comment>
<comment type="domain">
    <text>Lacks the C-terminal regulatory region which is replaced by HisZ.</text>
</comment>
<comment type="similarity">
    <text evidence="1">Belongs to the ATP phosphoribosyltransferase family. Short subfamily.</text>
</comment>